<organism>
    <name type="scientific">Streptococcus thermophilus (strain ATCC BAA-491 / LMD-9)</name>
    <dbReference type="NCBI Taxonomy" id="322159"/>
    <lineage>
        <taxon>Bacteria</taxon>
        <taxon>Bacillati</taxon>
        <taxon>Bacillota</taxon>
        <taxon>Bacilli</taxon>
        <taxon>Lactobacillales</taxon>
        <taxon>Streptococcaceae</taxon>
        <taxon>Streptococcus</taxon>
    </lineage>
</organism>
<gene>
    <name evidence="1" type="primary">tsaD</name>
    <name type="synonym">gcp</name>
    <name type="ordered locus">STER_1745</name>
</gene>
<reference key="1">
    <citation type="journal article" date="2006" name="Proc. Natl. Acad. Sci. U.S.A.">
        <title>Comparative genomics of the lactic acid bacteria.</title>
        <authorList>
            <person name="Makarova K.S."/>
            <person name="Slesarev A."/>
            <person name="Wolf Y.I."/>
            <person name="Sorokin A."/>
            <person name="Mirkin B."/>
            <person name="Koonin E.V."/>
            <person name="Pavlov A."/>
            <person name="Pavlova N."/>
            <person name="Karamychev V."/>
            <person name="Polouchine N."/>
            <person name="Shakhova V."/>
            <person name="Grigoriev I."/>
            <person name="Lou Y."/>
            <person name="Rohksar D."/>
            <person name="Lucas S."/>
            <person name="Huang K."/>
            <person name="Goodstein D.M."/>
            <person name="Hawkins T."/>
            <person name="Plengvidhya V."/>
            <person name="Welker D."/>
            <person name="Hughes J."/>
            <person name="Goh Y."/>
            <person name="Benson A."/>
            <person name="Baldwin K."/>
            <person name="Lee J.-H."/>
            <person name="Diaz-Muniz I."/>
            <person name="Dosti B."/>
            <person name="Smeianov V."/>
            <person name="Wechter W."/>
            <person name="Barabote R."/>
            <person name="Lorca G."/>
            <person name="Altermann E."/>
            <person name="Barrangou R."/>
            <person name="Ganesan B."/>
            <person name="Xie Y."/>
            <person name="Rawsthorne H."/>
            <person name="Tamir D."/>
            <person name="Parker C."/>
            <person name="Breidt F."/>
            <person name="Broadbent J.R."/>
            <person name="Hutkins R."/>
            <person name="O'Sullivan D."/>
            <person name="Steele J."/>
            <person name="Unlu G."/>
            <person name="Saier M.H. Jr."/>
            <person name="Klaenhammer T."/>
            <person name="Richardson P."/>
            <person name="Kozyavkin S."/>
            <person name="Weimer B.C."/>
            <person name="Mills D.A."/>
        </authorList>
    </citation>
    <scope>NUCLEOTIDE SEQUENCE [LARGE SCALE GENOMIC DNA]</scope>
    <source>
        <strain>ATCC BAA-491 / LMD-9</strain>
    </source>
</reference>
<dbReference type="EC" id="2.3.1.234" evidence="1"/>
<dbReference type="EMBL" id="CP000419">
    <property type="protein sequence ID" value="ABJ66886.1"/>
    <property type="molecule type" value="Genomic_DNA"/>
</dbReference>
<dbReference type="RefSeq" id="WP_011681638.1">
    <property type="nucleotide sequence ID" value="NC_008532.1"/>
</dbReference>
<dbReference type="SMR" id="Q03IT6"/>
<dbReference type="KEGG" id="ste:STER_1745"/>
<dbReference type="HOGENOM" id="CLU_023208_0_1_9"/>
<dbReference type="GO" id="GO:0005737">
    <property type="term" value="C:cytoplasm"/>
    <property type="evidence" value="ECO:0007669"/>
    <property type="project" value="UniProtKB-SubCell"/>
</dbReference>
<dbReference type="GO" id="GO:0005506">
    <property type="term" value="F:iron ion binding"/>
    <property type="evidence" value="ECO:0007669"/>
    <property type="project" value="UniProtKB-UniRule"/>
</dbReference>
<dbReference type="GO" id="GO:0061711">
    <property type="term" value="F:N(6)-L-threonylcarbamoyladenine synthase activity"/>
    <property type="evidence" value="ECO:0007669"/>
    <property type="project" value="UniProtKB-EC"/>
</dbReference>
<dbReference type="GO" id="GO:0002949">
    <property type="term" value="P:tRNA threonylcarbamoyladenosine modification"/>
    <property type="evidence" value="ECO:0007669"/>
    <property type="project" value="UniProtKB-UniRule"/>
</dbReference>
<dbReference type="CDD" id="cd24133">
    <property type="entry name" value="ASKHA_NBD_TsaD_bac"/>
    <property type="match status" value="1"/>
</dbReference>
<dbReference type="FunFam" id="3.30.420.40:FF:000012">
    <property type="entry name" value="tRNA N6-adenosine threonylcarbamoyltransferase"/>
    <property type="match status" value="1"/>
</dbReference>
<dbReference type="FunFam" id="3.30.420.40:FF:000040">
    <property type="entry name" value="tRNA N6-adenosine threonylcarbamoyltransferase"/>
    <property type="match status" value="1"/>
</dbReference>
<dbReference type="Gene3D" id="3.30.420.40">
    <property type="match status" value="2"/>
</dbReference>
<dbReference type="HAMAP" id="MF_01445">
    <property type="entry name" value="TsaD"/>
    <property type="match status" value="1"/>
</dbReference>
<dbReference type="InterPro" id="IPR043129">
    <property type="entry name" value="ATPase_NBD"/>
</dbReference>
<dbReference type="InterPro" id="IPR000905">
    <property type="entry name" value="Gcp-like_dom"/>
</dbReference>
<dbReference type="InterPro" id="IPR017861">
    <property type="entry name" value="KAE1/TsaD"/>
</dbReference>
<dbReference type="InterPro" id="IPR017860">
    <property type="entry name" value="Peptidase_M22_CS"/>
</dbReference>
<dbReference type="InterPro" id="IPR022450">
    <property type="entry name" value="TsaD"/>
</dbReference>
<dbReference type="NCBIfam" id="TIGR00329">
    <property type="entry name" value="gcp_kae1"/>
    <property type="match status" value="1"/>
</dbReference>
<dbReference type="NCBIfam" id="TIGR03723">
    <property type="entry name" value="T6A_TsaD_YgjD"/>
    <property type="match status" value="1"/>
</dbReference>
<dbReference type="PANTHER" id="PTHR11735">
    <property type="entry name" value="TRNA N6-ADENOSINE THREONYLCARBAMOYLTRANSFERASE"/>
    <property type="match status" value="1"/>
</dbReference>
<dbReference type="PANTHER" id="PTHR11735:SF6">
    <property type="entry name" value="TRNA N6-ADENOSINE THREONYLCARBAMOYLTRANSFERASE, MITOCHONDRIAL"/>
    <property type="match status" value="1"/>
</dbReference>
<dbReference type="Pfam" id="PF00814">
    <property type="entry name" value="TsaD"/>
    <property type="match status" value="1"/>
</dbReference>
<dbReference type="PRINTS" id="PR00789">
    <property type="entry name" value="OSIALOPTASE"/>
</dbReference>
<dbReference type="SUPFAM" id="SSF53067">
    <property type="entry name" value="Actin-like ATPase domain"/>
    <property type="match status" value="1"/>
</dbReference>
<dbReference type="PROSITE" id="PS01016">
    <property type="entry name" value="GLYCOPROTEASE"/>
    <property type="match status" value="1"/>
</dbReference>
<name>TSAD_STRTD</name>
<protein>
    <recommendedName>
        <fullName evidence="1">tRNA N6-adenosine threonylcarbamoyltransferase</fullName>
        <ecNumber evidence="1">2.3.1.234</ecNumber>
    </recommendedName>
    <alternativeName>
        <fullName evidence="1">N6-L-threonylcarbamoyladenine synthase</fullName>
        <shortName evidence="1">t(6)A synthase</shortName>
    </alternativeName>
    <alternativeName>
        <fullName evidence="1">t(6)A37 threonylcarbamoyladenosine biosynthesis protein TsaD</fullName>
    </alternativeName>
    <alternativeName>
        <fullName evidence="1">tRNA threonylcarbamoyladenosine biosynthesis protein TsaD</fullName>
    </alternativeName>
</protein>
<feature type="chain" id="PRO_0000303578" description="tRNA N6-adenosine threonylcarbamoyltransferase">
    <location>
        <begin position="1"/>
        <end position="337"/>
    </location>
</feature>
<feature type="binding site" evidence="1">
    <location>
        <position position="114"/>
    </location>
    <ligand>
        <name>Fe cation</name>
        <dbReference type="ChEBI" id="CHEBI:24875"/>
    </ligand>
</feature>
<feature type="binding site" evidence="1">
    <location>
        <position position="118"/>
    </location>
    <ligand>
        <name>Fe cation</name>
        <dbReference type="ChEBI" id="CHEBI:24875"/>
    </ligand>
</feature>
<feature type="binding site" evidence="1">
    <location>
        <begin position="136"/>
        <end position="140"/>
    </location>
    <ligand>
        <name>substrate</name>
    </ligand>
</feature>
<feature type="binding site" evidence="1">
    <location>
        <position position="169"/>
    </location>
    <ligand>
        <name>substrate</name>
    </ligand>
</feature>
<feature type="binding site" evidence="1">
    <location>
        <position position="182"/>
    </location>
    <ligand>
        <name>substrate</name>
    </ligand>
</feature>
<feature type="binding site" evidence="1">
    <location>
        <position position="186"/>
    </location>
    <ligand>
        <name>substrate</name>
    </ligand>
</feature>
<feature type="binding site" evidence="1">
    <location>
        <position position="275"/>
    </location>
    <ligand>
        <name>substrate</name>
    </ligand>
</feature>
<feature type="binding site" evidence="1">
    <location>
        <position position="301"/>
    </location>
    <ligand>
        <name>Fe cation</name>
        <dbReference type="ChEBI" id="CHEBI:24875"/>
    </ligand>
</feature>
<keyword id="KW-0012">Acyltransferase</keyword>
<keyword id="KW-0963">Cytoplasm</keyword>
<keyword id="KW-0408">Iron</keyword>
<keyword id="KW-0479">Metal-binding</keyword>
<keyword id="KW-0808">Transferase</keyword>
<keyword id="KW-0819">tRNA processing</keyword>
<comment type="function">
    <text evidence="1">Required for the formation of a threonylcarbamoyl group on adenosine at position 37 (t(6)A37) in tRNAs that read codons beginning with adenine. Is involved in the transfer of the threonylcarbamoyl moiety of threonylcarbamoyl-AMP (TC-AMP) to the N6 group of A37, together with TsaE and TsaB. TsaD likely plays a direct catalytic role in this reaction.</text>
</comment>
<comment type="catalytic activity">
    <reaction evidence="1">
        <text>L-threonylcarbamoyladenylate + adenosine(37) in tRNA = N(6)-L-threonylcarbamoyladenosine(37) in tRNA + AMP + H(+)</text>
        <dbReference type="Rhea" id="RHEA:37059"/>
        <dbReference type="Rhea" id="RHEA-COMP:10162"/>
        <dbReference type="Rhea" id="RHEA-COMP:10163"/>
        <dbReference type="ChEBI" id="CHEBI:15378"/>
        <dbReference type="ChEBI" id="CHEBI:73682"/>
        <dbReference type="ChEBI" id="CHEBI:74411"/>
        <dbReference type="ChEBI" id="CHEBI:74418"/>
        <dbReference type="ChEBI" id="CHEBI:456215"/>
        <dbReference type="EC" id="2.3.1.234"/>
    </reaction>
</comment>
<comment type="cofactor">
    <cofactor evidence="1">
        <name>Fe(2+)</name>
        <dbReference type="ChEBI" id="CHEBI:29033"/>
    </cofactor>
    <text evidence="1">Binds 1 Fe(2+) ion per subunit.</text>
</comment>
<comment type="subcellular location">
    <subcellularLocation>
        <location evidence="1">Cytoplasm</location>
    </subcellularLocation>
</comment>
<comment type="similarity">
    <text evidence="1">Belongs to the KAE1 / TsaD family.</text>
</comment>
<sequence>MADRYILAVESSCDETSVAVLKNEKDLLSNIIASQVESHKRFGGVVPEVASRHHVEVVTLCIKDALSEAGIVAEQLDAVAVTYGPGLVGALLVGMAAAKAFAWAHGLPLIPVNHMAGHLMAAREVQELEYPLLALLVSGGHTELVYVSEPGNYKIVGETRDDAVGEAYDKVGRVMGLTYPAGREIDELAHKGKDVYDFPRAMIKEDHLEFSFSGLKSAFINLHHNAEQKGEVLVTEDLCASFQAAVLDILLAKTKKALERYPVKTLVVAGGVAANQGLRERLAEEITDVDVVIPPLRLCGDNAGMIALAAAIECDKKHFADLDLNAKPSLAFAGFEE</sequence>
<proteinExistence type="inferred from homology"/>
<accession>Q03IT6</accession>
<evidence type="ECO:0000255" key="1">
    <source>
        <dbReference type="HAMAP-Rule" id="MF_01445"/>
    </source>
</evidence>